<proteinExistence type="predicted"/>
<protein>
    <recommendedName>
        <fullName>Colicin-Ia immunity protein</fullName>
    </recommendedName>
</protein>
<accession>P08701</accession>
<reference key="1">
    <citation type="journal article" date="1986" name="J. Bacteriol.">
        <title>DNA and amino acid sequence analysis of structural and immunity genes of colicins Ia and Ib.</title>
        <authorList>
            <person name="Mankovich J.A."/>
            <person name="Hsu C.-H."/>
            <person name="Konisky J."/>
        </authorList>
    </citation>
    <scope>NUCLEOTIDE SEQUENCE [GENOMIC DNA]</scope>
    <source>
        <plasmid>ColIa-CA53</plasmid>
    </source>
</reference>
<reference key="2">
    <citation type="journal article" date="1994" name="Proc. Natl. Acad. Sci. U.S.A.">
        <title>Nucleotide polymorphism in colicin E1 and Ia plasmids from natural isolates of Escherichia coli.</title>
        <authorList>
            <person name="Riley M.A."/>
            <person name="Tan Y."/>
            <person name="Wang J."/>
        </authorList>
    </citation>
    <scope>NUCLEOTIDE SEQUENCE [GENOMIC DNA]</scope>
    <source>
        <plasmid>ColIa-EC28</plasmid>
        <plasmid>ColIa-EC3</plasmid>
        <plasmid>ColIa-EC34</plasmid>
    </source>
</reference>
<keyword id="KW-0079">Bacteriocin immunity</keyword>
<keyword id="KW-1003">Cell membrane</keyword>
<keyword id="KW-0472">Membrane</keyword>
<keyword id="KW-0614">Plasmid</keyword>
<keyword id="KW-0812">Transmembrane</keyword>
<keyword id="KW-1133">Transmembrane helix</keyword>
<feature type="chain" id="PRO_0000218693" description="Colicin-Ia immunity protein">
    <location>
        <begin position="1"/>
        <end position="111"/>
    </location>
</feature>
<feature type="transmembrane region" description="Helical" evidence="1">
    <location>
        <begin position="33"/>
        <end position="53"/>
    </location>
</feature>
<feature type="transmembrane region" description="Helical" evidence="1">
    <location>
        <begin position="85"/>
        <end position="105"/>
    </location>
</feature>
<name>IMMI_ECOLX</name>
<sequence>MNRKYYFNNMWWGWVTGGYMLYMSWDYEFKYRLLFWCISLCGMVLYPVAKWYIEDTALKFTRPDFWNSGFFADTPGKMGLLAVYTGTVFILSLPLSMIYILSVIIKRLSVR</sequence>
<evidence type="ECO:0000255" key="1"/>
<evidence type="ECO:0000305" key="2"/>
<comment type="function">
    <text>This protein is able to protect a cell, which harbors the plasmid ColIa-CA53 encoding colicin Ia, against colicin Ia.</text>
</comment>
<comment type="subcellular location">
    <subcellularLocation>
        <location evidence="2">Cell membrane</location>
        <topology evidence="2">Multi-pass membrane protein</topology>
    </subcellularLocation>
</comment>
<geneLocation type="plasmid">
    <name>ColIa-CA53</name>
</geneLocation>
<geneLocation type="plasmid">
    <name>ColIa-EC3</name>
</geneLocation>
<geneLocation type="plasmid">
    <name>ColIa-EC28</name>
</geneLocation>
<geneLocation type="plasmid">
    <name>ColIa-EC34</name>
</geneLocation>
<dbReference type="EMBL" id="M13819">
    <property type="protein sequence ID" value="AAA23183.1"/>
    <property type="molecule type" value="Genomic_DNA"/>
</dbReference>
<dbReference type="EMBL" id="U15622">
    <property type="protein sequence ID" value="AAA59397.1"/>
    <property type="molecule type" value="Genomic_DNA"/>
</dbReference>
<dbReference type="EMBL" id="U15623">
    <property type="protein sequence ID" value="AAA59399.1"/>
    <property type="molecule type" value="Genomic_DNA"/>
</dbReference>
<dbReference type="EMBL" id="U15624">
    <property type="protein sequence ID" value="AAA59401.1"/>
    <property type="molecule type" value="Genomic_DNA"/>
</dbReference>
<dbReference type="PIR" id="E25035">
    <property type="entry name" value="E25035"/>
</dbReference>
<dbReference type="RefSeq" id="WP_001080734.1">
    <property type="nucleotide sequence ID" value="NZ_WTNN01000033.1"/>
</dbReference>
<dbReference type="RefSeq" id="YP_006903406.1">
    <property type="nucleotide sequence ID" value="NC_019044.1"/>
</dbReference>
<dbReference type="SMR" id="P08701"/>
<dbReference type="GO" id="GO:0005886">
    <property type="term" value="C:plasma membrane"/>
    <property type="evidence" value="ECO:0007669"/>
    <property type="project" value="UniProtKB-SubCell"/>
</dbReference>
<dbReference type="GO" id="GO:0015643">
    <property type="term" value="F:toxic substance binding"/>
    <property type="evidence" value="ECO:0007669"/>
    <property type="project" value="InterPro"/>
</dbReference>
<dbReference type="GO" id="GO:0030153">
    <property type="term" value="P:bacteriocin immunity"/>
    <property type="evidence" value="ECO:0007669"/>
    <property type="project" value="UniProtKB-KW"/>
</dbReference>
<dbReference type="InterPro" id="IPR003061">
    <property type="entry name" value="Microcin"/>
</dbReference>
<dbReference type="Pfam" id="PF03526">
    <property type="entry name" value="Microcin"/>
    <property type="match status" value="1"/>
</dbReference>
<organism>
    <name type="scientific">Escherichia coli</name>
    <dbReference type="NCBI Taxonomy" id="562"/>
    <lineage>
        <taxon>Bacteria</taxon>
        <taxon>Pseudomonadati</taxon>
        <taxon>Pseudomonadota</taxon>
        <taxon>Gammaproteobacteria</taxon>
        <taxon>Enterobacterales</taxon>
        <taxon>Enterobacteriaceae</taxon>
        <taxon>Escherichia</taxon>
    </lineage>
</organism>